<accession>Q12E50</accession>
<reference key="1">
    <citation type="journal article" date="2008" name="Appl. Environ. Microbiol.">
        <title>The genome of Polaromonas sp. strain JS666: insights into the evolution of a hydrocarbon- and xenobiotic-degrading bacterium, and features of relevance to biotechnology.</title>
        <authorList>
            <person name="Mattes T.E."/>
            <person name="Alexander A.K."/>
            <person name="Richardson P.M."/>
            <person name="Munk A.C."/>
            <person name="Han C.S."/>
            <person name="Stothard P."/>
            <person name="Coleman N.V."/>
        </authorList>
    </citation>
    <scope>NUCLEOTIDE SEQUENCE [LARGE SCALE GENOMIC DNA]</scope>
    <source>
        <strain>JS666 / ATCC BAA-500</strain>
    </source>
</reference>
<comment type="function">
    <text evidence="1">Methylates the ribose at the nucleotide 34 wobble position in the two leucyl isoacceptors tRNA(Leu)(CmAA) and tRNA(Leu)(cmnm5UmAA). Catalyzes the methyl transfer from S-adenosyl-L-methionine to the 2'-OH of the wobble nucleotide.</text>
</comment>
<comment type="catalytic activity">
    <reaction evidence="1">
        <text>cytidine(34) in tRNA + S-adenosyl-L-methionine = 2'-O-methylcytidine(34) in tRNA + S-adenosyl-L-homocysteine + H(+)</text>
        <dbReference type="Rhea" id="RHEA:43084"/>
        <dbReference type="Rhea" id="RHEA-COMP:10331"/>
        <dbReference type="Rhea" id="RHEA-COMP:10332"/>
        <dbReference type="ChEBI" id="CHEBI:15378"/>
        <dbReference type="ChEBI" id="CHEBI:57856"/>
        <dbReference type="ChEBI" id="CHEBI:59789"/>
        <dbReference type="ChEBI" id="CHEBI:74495"/>
        <dbReference type="ChEBI" id="CHEBI:82748"/>
        <dbReference type="EC" id="2.1.1.207"/>
    </reaction>
</comment>
<comment type="catalytic activity">
    <reaction evidence="1">
        <text>5-carboxymethylaminomethyluridine(34) in tRNA(Leu) + S-adenosyl-L-methionine = 5-carboxymethylaminomethyl-2'-O-methyluridine(34) in tRNA(Leu) + S-adenosyl-L-homocysteine + H(+)</text>
        <dbReference type="Rhea" id="RHEA:43088"/>
        <dbReference type="Rhea" id="RHEA-COMP:10333"/>
        <dbReference type="Rhea" id="RHEA-COMP:10334"/>
        <dbReference type="ChEBI" id="CHEBI:15378"/>
        <dbReference type="ChEBI" id="CHEBI:57856"/>
        <dbReference type="ChEBI" id="CHEBI:59789"/>
        <dbReference type="ChEBI" id="CHEBI:74508"/>
        <dbReference type="ChEBI" id="CHEBI:74511"/>
        <dbReference type="EC" id="2.1.1.207"/>
    </reaction>
</comment>
<comment type="subunit">
    <text evidence="1">Homodimer.</text>
</comment>
<comment type="subcellular location">
    <subcellularLocation>
        <location evidence="1">Cytoplasm</location>
    </subcellularLocation>
</comment>
<comment type="similarity">
    <text evidence="1">Belongs to the class IV-like SAM-binding methyltransferase superfamily. RNA methyltransferase TrmH family. TrmL subfamily.</text>
</comment>
<comment type="sequence caution" evidence="2">
    <conflict type="erroneous initiation">
        <sequence resource="EMBL-CDS" id="ABE43192"/>
    </conflict>
    <text>Extended N-terminus.</text>
</comment>
<name>TRML_POLSJ</name>
<dbReference type="EC" id="2.1.1.207" evidence="1"/>
<dbReference type="EMBL" id="CP000316">
    <property type="protein sequence ID" value="ABE43192.1"/>
    <property type="status" value="ALT_INIT"/>
    <property type="molecule type" value="Genomic_DNA"/>
</dbReference>
<dbReference type="RefSeq" id="WP_041388455.1">
    <property type="nucleotide sequence ID" value="NC_007948.1"/>
</dbReference>
<dbReference type="SMR" id="Q12E50"/>
<dbReference type="STRING" id="296591.Bpro_1241"/>
<dbReference type="KEGG" id="pol:Bpro_1241"/>
<dbReference type="eggNOG" id="COG0219">
    <property type="taxonomic scope" value="Bacteria"/>
</dbReference>
<dbReference type="HOGENOM" id="CLU_110125_1_0_4"/>
<dbReference type="OrthoDB" id="9789043at2"/>
<dbReference type="Proteomes" id="UP000001983">
    <property type="component" value="Chromosome"/>
</dbReference>
<dbReference type="GO" id="GO:0005737">
    <property type="term" value="C:cytoplasm"/>
    <property type="evidence" value="ECO:0007669"/>
    <property type="project" value="UniProtKB-SubCell"/>
</dbReference>
<dbReference type="GO" id="GO:0003723">
    <property type="term" value="F:RNA binding"/>
    <property type="evidence" value="ECO:0007669"/>
    <property type="project" value="InterPro"/>
</dbReference>
<dbReference type="GO" id="GO:0141102">
    <property type="term" value="F:tRNA (5-carboxymethylaminomethyluridine(34)-2'-O)-methyltransferase activity"/>
    <property type="evidence" value="ECO:0007669"/>
    <property type="project" value="RHEA"/>
</dbReference>
<dbReference type="GO" id="GO:0141098">
    <property type="term" value="F:tRNA (cytidine(34)-2'-O)-methyltransferase activity"/>
    <property type="evidence" value="ECO:0007669"/>
    <property type="project" value="RHEA"/>
</dbReference>
<dbReference type="GO" id="GO:0002131">
    <property type="term" value="P:wobble position cytosine ribose methylation"/>
    <property type="evidence" value="ECO:0007669"/>
    <property type="project" value="TreeGrafter"/>
</dbReference>
<dbReference type="GO" id="GO:0002132">
    <property type="term" value="P:wobble position uridine ribose methylation"/>
    <property type="evidence" value="ECO:0007669"/>
    <property type="project" value="TreeGrafter"/>
</dbReference>
<dbReference type="CDD" id="cd18094">
    <property type="entry name" value="SpoU-like_TrmL"/>
    <property type="match status" value="1"/>
</dbReference>
<dbReference type="FunFam" id="3.40.1280.10:FF:000002">
    <property type="entry name" value="Peptidylprolyl isomerase"/>
    <property type="match status" value="1"/>
</dbReference>
<dbReference type="Gene3D" id="3.40.1280.10">
    <property type="match status" value="1"/>
</dbReference>
<dbReference type="HAMAP" id="MF_01885">
    <property type="entry name" value="tRNA_methyltr_TrmL"/>
    <property type="match status" value="1"/>
</dbReference>
<dbReference type="InterPro" id="IPR029028">
    <property type="entry name" value="Alpha/beta_knot_MTases"/>
</dbReference>
<dbReference type="InterPro" id="IPR001537">
    <property type="entry name" value="SpoU_MeTrfase"/>
</dbReference>
<dbReference type="InterPro" id="IPR016914">
    <property type="entry name" value="TrmL"/>
</dbReference>
<dbReference type="InterPro" id="IPR029026">
    <property type="entry name" value="tRNA_m1G_MTases_N"/>
</dbReference>
<dbReference type="NCBIfam" id="TIGR00185">
    <property type="entry name" value="tRNA_yibK_trmL"/>
    <property type="match status" value="1"/>
</dbReference>
<dbReference type="PANTHER" id="PTHR42971">
    <property type="entry name" value="TRNA (CYTIDINE(34)-2'-O)-METHYLTRANSFERASE"/>
    <property type="match status" value="1"/>
</dbReference>
<dbReference type="PANTHER" id="PTHR42971:SF1">
    <property type="entry name" value="TRNA (CYTIDINE(34)-2'-O)-METHYLTRANSFERASE"/>
    <property type="match status" value="1"/>
</dbReference>
<dbReference type="Pfam" id="PF00588">
    <property type="entry name" value="SpoU_methylase"/>
    <property type="match status" value="1"/>
</dbReference>
<dbReference type="PIRSF" id="PIRSF029256">
    <property type="entry name" value="SpoU_TrmH_prd"/>
    <property type="match status" value="1"/>
</dbReference>
<dbReference type="SUPFAM" id="SSF75217">
    <property type="entry name" value="alpha/beta knot"/>
    <property type="match status" value="1"/>
</dbReference>
<proteinExistence type="inferred from homology"/>
<keyword id="KW-0963">Cytoplasm</keyword>
<keyword id="KW-0489">Methyltransferase</keyword>
<keyword id="KW-1185">Reference proteome</keyword>
<keyword id="KW-0949">S-adenosyl-L-methionine</keyword>
<keyword id="KW-0808">Transferase</keyword>
<keyword id="KW-0819">tRNA processing</keyword>
<gene>
    <name evidence="1" type="primary">trmL</name>
    <name type="ordered locus">Bpro_1241</name>
</gene>
<sequence>MFNIVLVEPEIPPNTGNVIRLAANTGCRLHLVEPLGFSMDDKHMRRAGLDYHEYAQVLRHASWQALLDSQRPPAGRLFAMTTHGAGSVYDMRFLPGDWLVFGAETRGLAPDVRESFPMAQRLRVPMQPGQRSLNLSNTVAVTVFEAWRQNGFAGSHHPAAADQG</sequence>
<organism>
    <name type="scientific">Polaromonas sp. (strain JS666 / ATCC BAA-500)</name>
    <dbReference type="NCBI Taxonomy" id="296591"/>
    <lineage>
        <taxon>Bacteria</taxon>
        <taxon>Pseudomonadati</taxon>
        <taxon>Pseudomonadota</taxon>
        <taxon>Betaproteobacteria</taxon>
        <taxon>Burkholderiales</taxon>
        <taxon>Comamonadaceae</taxon>
        <taxon>Polaromonas</taxon>
    </lineage>
</organism>
<evidence type="ECO:0000255" key="1">
    <source>
        <dbReference type="HAMAP-Rule" id="MF_01885"/>
    </source>
</evidence>
<evidence type="ECO:0000305" key="2"/>
<feature type="chain" id="PRO_0000401950" description="tRNA (cytidine(34)-2'-O)-methyltransferase">
    <location>
        <begin position="1"/>
        <end position="164"/>
    </location>
</feature>
<feature type="binding site" evidence="1">
    <location>
        <position position="80"/>
    </location>
    <ligand>
        <name>S-adenosyl-L-methionine</name>
        <dbReference type="ChEBI" id="CHEBI:59789"/>
    </ligand>
</feature>
<feature type="binding site" evidence="1">
    <location>
        <position position="102"/>
    </location>
    <ligand>
        <name>S-adenosyl-L-methionine</name>
        <dbReference type="ChEBI" id="CHEBI:59789"/>
    </ligand>
</feature>
<feature type="binding site" evidence="1">
    <location>
        <position position="124"/>
    </location>
    <ligand>
        <name>S-adenosyl-L-methionine</name>
        <dbReference type="ChEBI" id="CHEBI:59789"/>
    </ligand>
</feature>
<feature type="binding site" evidence="1">
    <location>
        <position position="132"/>
    </location>
    <ligand>
        <name>S-adenosyl-L-methionine</name>
        <dbReference type="ChEBI" id="CHEBI:59789"/>
    </ligand>
</feature>
<protein>
    <recommendedName>
        <fullName evidence="1">tRNA (cytidine(34)-2'-O)-methyltransferase</fullName>
        <ecNumber evidence="1">2.1.1.207</ecNumber>
    </recommendedName>
    <alternativeName>
        <fullName evidence="1">tRNA (cytidine/uridine-2'-O-)-methyltransferase TrmL</fullName>
    </alternativeName>
</protein>